<comment type="function">
    <text evidence="2">Catalyzes the epimerization of trans-4-hydroxy-L-proline (t4LHyp) to cis-4-hydroxy-D-proline (c4DHyp). Is likely involved in a degradation pathway that converts t4LHyp to alpha-ketoglutarate. Can also catalyze the epimerization of trans-3-hydroxy-L-proline (t3LHyp) to cis-3-hydroxy-D-proline (c3DHyp), albeit with 170-fold lower efficiency. Displays no proline racemase activity.</text>
</comment>
<comment type="catalytic activity">
    <reaction evidence="2">
        <text>trans-4-hydroxy-L-proline = cis-4-hydroxy-D-proline</text>
        <dbReference type="Rhea" id="RHEA:21152"/>
        <dbReference type="ChEBI" id="CHEBI:57690"/>
        <dbReference type="ChEBI" id="CHEBI:58375"/>
        <dbReference type="EC" id="5.1.1.8"/>
    </reaction>
</comment>
<comment type="biophysicochemical properties">
    <kinetics>
        <KM evidence="2">7.1 mM for trans-4-hydroxy-L-proline</KM>
        <KM evidence="2">31 mM for trans-3-hydroxy-L-proline</KM>
        <text evidence="2">kcat is 89 sec(-1) for t4LHyp epimerization. kcat is 2.4 sec(-1) for t3LHyp epimerization.</text>
    </kinetics>
</comment>
<comment type="similarity">
    <text evidence="4">Belongs to the proline racemase family.</text>
</comment>
<evidence type="ECO:0000250" key="1">
    <source>
        <dbReference type="UniProtKB" id="Q4KGU2"/>
    </source>
</evidence>
<evidence type="ECO:0000269" key="2">
    <source>
    </source>
</evidence>
<evidence type="ECO:0000303" key="3">
    <source>
    </source>
</evidence>
<evidence type="ECO:0000305" key="4"/>
<evidence type="ECO:0000312" key="5">
    <source>
        <dbReference type="EMBL" id="ABS13831.1"/>
    </source>
</evidence>
<organism>
    <name type="scientific">Brucella anthropi (strain ATCC 49188 / DSM 6882 / CCUG 24695 / JCM 21032 / LMG 3331 / NBRC 15819 / NCTC 12168 / Alc 37)</name>
    <name type="common">Ochrobactrum anthropi</name>
    <dbReference type="NCBI Taxonomy" id="439375"/>
    <lineage>
        <taxon>Bacteria</taxon>
        <taxon>Pseudomonadati</taxon>
        <taxon>Pseudomonadota</taxon>
        <taxon>Alphaproteobacteria</taxon>
        <taxon>Hyphomicrobiales</taxon>
        <taxon>Brucellaceae</taxon>
        <taxon>Brucella/Ochrobactrum group</taxon>
        <taxon>Brucella</taxon>
    </lineage>
</organism>
<name>4HPE2_BRUA4</name>
<accession>A6WXX7</accession>
<proteinExistence type="evidence at protein level"/>
<reference key="1">
    <citation type="journal article" date="2011" name="J. Bacteriol.">
        <title>Genome of Ochrobactrum anthropi ATCC 49188 T, a versatile opportunistic pathogen and symbiont of several eukaryotic hosts.</title>
        <authorList>
            <person name="Chain P.S."/>
            <person name="Lang D.M."/>
            <person name="Comerci D.J."/>
            <person name="Malfatti S.A."/>
            <person name="Vergez L.M."/>
            <person name="Shin M."/>
            <person name="Ugalde R.A."/>
            <person name="Garcia E."/>
            <person name="Tolmasky M.E."/>
        </authorList>
    </citation>
    <scope>NUCLEOTIDE SEQUENCE [LARGE SCALE GENOMIC DNA]</scope>
    <source>
        <strain>ATCC 49188 / DSM 6882 / CCUG 24695 / JCM 21032 / LMG 3331 / NBRC 15819 / NCTC 12168 / Alc 37</strain>
    </source>
</reference>
<reference key="2">
    <citation type="journal article" date="2014" name="Elife">
        <title>Prediction and characterization of enzymatic activities guided by sequence similarity and genome neighborhood networks.</title>
        <authorList>
            <person name="Zhao S."/>
            <person name="Sakai A."/>
            <person name="Zhang X."/>
            <person name="Vetting M.W."/>
            <person name="Kumar R."/>
            <person name="Hillerich B."/>
            <person name="San Francisco B."/>
            <person name="Solbiati J."/>
            <person name="Steves A."/>
            <person name="Brown S."/>
            <person name="Akiva E."/>
            <person name="Barber A."/>
            <person name="Seidel R.D."/>
            <person name="Babbitt P.C."/>
            <person name="Almo S.C."/>
            <person name="Gerlt J.A."/>
            <person name="Jacobson M.P."/>
        </authorList>
    </citation>
    <scope>FUNCTION</scope>
    <scope>CATALYTIC ACTIVITY</scope>
    <scope>BIOPHYSICOCHEMICAL PROPERTIES</scope>
</reference>
<dbReference type="EC" id="5.1.1.8" evidence="2"/>
<dbReference type="EMBL" id="CP000758">
    <property type="protein sequence ID" value="ABS13831.1"/>
    <property type="molecule type" value="Genomic_DNA"/>
</dbReference>
<dbReference type="RefSeq" id="WP_012091266.1">
    <property type="nucleotide sequence ID" value="NC_009667.1"/>
</dbReference>
<dbReference type="SMR" id="A6WXX7"/>
<dbReference type="STRING" id="439375.Oant_1111"/>
<dbReference type="KEGG" id="oan:Oant_1111"/>
<dbReference type="PATRIC" id="fig|439375.7.peg.1161"/>
<dbReference type="eggNOG" id="COG3938">
    <property type="taxonomic scope" value="Bacteria"/>
</dbReference>
<dbReference type="HOGENOM" id="CLU_036729_0_0_5"/>
<dbReference type="PhylomeDB" id="A6WXX7"/>
<dbReference type="SABIO-RK" id="A6WXX7"/>
<dbReference type="Proteomes" id="UP000002301">
    <property type="component" value="Chromosome 1"/>
</dbReference>
<dbReference type="GO" id="GO:0047580">
    <property type="term" value="F:4-hydroxyproline epimerase activity"/>
    <property type="evidence" value="ECO:0000314"/>
    <property type="project" value="CACAO"/>
</dbReference>
<dbReference type="FunFam" id="3.10.310.10:FF:000005">
    <property type="entry name" value="Proline racemase"/>
    <property type="match status" value="1"/>
</dbReference>
<dbReference type="Gene3D" id="3.10.310.10">
    <property type="entry name" value="Diaminopimelate Epimerase, Chain A, domain 1"/>
    <property type="match status" value="2"/>
</dbReference>
<dbReference type="InterPro" id="IPR008794">
    <property type="entry name" value="Pro_racemase_fam"/>
</dbReference>
<dbReference type="NCBIfam" id="NF010578">
    <property type="entry name" value="PRK13971.1"/>
    <property type="match status" value="1"/>
</dbReference>
<dbReference type="PANTHER" id="PTHR33442">
    <property type="entry name" value="TRANS-3-HYDROXY-L-PROLINE DEHYDRATASE"/>
    <property type="match status" value="1"/>
</dbReference>
<dbReference type="PANTHER" id="PTHR33442:SF1">
    <property type="entry name" value="TRANS-3-HYDROXY-L-PROLINE DEHYDRATASE"/>
    <property type="match status" value="1"/>
</dbReference>
<dbReference type="Pfam" id="PF05544">
    <property type="entry name" value="Pro_racemase"/>
    <property type="match status" value="1"/>
</dbReference>
<dbReference type="PIRSF" id="PIRSF029792">
    <property type="entry name" value="Pro_racemase"/>
    <property type="match status" value="1"/>
</dbReference>
<dbReference type="SFLD" id="SFLDS00028">
    <property type="entry name" value="Proline_Racemase"/>
    <property type="match status" value="1"/>
</dbReference>
<dbReference type="SUPFAM" id="SSF54506">
    <property type="entry name" value="Diaminopimelate epimerase-like"/>
    <property type="match status" value="1"/>
</dbReference>
<feature type="chain" id="PRO_0000432277" description="4-hydroxyproline 2-epimerase 2">
    <location>
        <begin position="1"/>
        <end position="337"/>
    </location>
</feature>
<feature type="active site" description="Proton acceptor" evidence="1">
    <location>
        <position position="90"/>
    </location>
</feature>
<feature type="active site" description="Proton donor" evidence="1">
    <location>
        <position position="253"/>
    </location>
</feature>
<feature type="binding site" evidence="1">
    <location>
        <begin position="91"/>
        <end position="92"/>
    </location>
    <ligand>
        <name>substrate</name>
    </ligand>
</feature>
<feature type="binding site" evidence="1">
    <location>
        <position position="223"/>
    </location>
    <ligand>
        <name>substrate</name>
    </ligand>
</feature>
<feature type="binding site" evidence="1">
    <location>
        <position position="249"/>
    </location>
    <ligand>
        <name>substrate</name>
    </ligand>
</feature>
<feature type="binding site" evidence="1">
    <location>
        <begin position="254"/>
        <end position="255"/>
    </location>
    <ligand>
        <name>substrate</name>
    </ligand>
</feature>
<gene>
    <name evidence="5" type="ordered locus">Oant_1111</name>
</gene>
<keyword id="KW-0413">Isomerase</keyword>
<keyword id="KW-1185">Reference proteome</keyword>
<sequence>MARHSFFCVDGHTCGNPVRLVAGGGPNLEGSTMMEKRAHFLREYDWIRTGLMFEPRGHDMMSGSILYPPTRPDCDVAVLFIETSGCLPMCGHGTIGTVTMAIEQGLVTPKTPGKLNLDTPAGLVAIEYEQNGQYVERVRLTNVPAFLYAEGLEVECPDLGNLKVDVAYGGNFYAIVEPQENYTDMEDYSALQLIAWSPILRERLNEKYKFQHPLLPDINRLSHILWTGKPKHPEAHARNAVFYGDKAIDRSPCGTGTSARMAQLAAKGKLKPGDEFVHESIIGSLFHGRVERATEVVGQDRTLPAIIPSIAGWARMTGYNTIFIDDRDPFAHGFTVA</sequence>
<protein>
    <recommendedName>
        <fullName evidence="3">4-hydroxyproline 2-epimerase 2</fullName>
        <shortName>4Hyp 2-epimerase 2</shortName>
        <shortName evidence="3">4HypE 2</shortName>
        <ecNumber evidence="2">5.1.1.8</ecNumber>
    </recommendedName>
</protein>